<dbReference type="EMBL" id="U09205">
    <property type="protein sequence ID" value="AAB60606.1"/>
    <property type="molecule type" value="mRNA"/>
</dbReference>
<dbReference type="PIR" id="A57711">
    <property type="entry name" value="A57711"/>
</dbReference>
<dbReference type="SMR" id="P45883"/>
<dbReference type="GO" id="GO:0005783">
    <property type="term" value="C:endoplasmic reticulum"/>
    <property type="evidence" value="ECO:0007669"/>
    <property type="project" value="UniProtKB-SubCell"/>
</dbReference>
<dbReference type="GO" id="GO:0005794">
    <property type="term" value="C:Golgi apparatus"/>
    <property type="evidence" value="ECO:0007669"/>
    <property type="project" value="UniProtKB-SubCell"/>
</dbReference>
<dbReference type="GO" id="GO:0000062">
    <property type="term" value="F:fatty-acyl-CoA binding"/>
    <property type="evidence" value="ECO:0007669"/>
    <property type="project" value="InterPro"/>
</dbReference>
<dbReference type="GO" id="GO:0006631">
    <property type="term" value="P:fatty acid metabolic process"/>
    <property type="evidence" value="ECO:0007669"/>
    <property type="project" value="TreeGrafter"/>
</dbReference>
<dbReference type="CDD" id="cd00435">
    <property type="entry name" value="ACBP"/>
    <property type="match status" value="1"/>
</dbReference>
<dbReference type="FunFam" id="1.20.80.10:FF:000010">
    <property type="entry name" value="Acyl-CoA-binding domain-containing protein 5"/>
    <property type="match status" value="1"/>
</dbReference>
<dbReference type="Gene3D" id="1.20.80.10">
    <property type="match status" value="1"/>
</dbReference>
<dbReference type="InterPro" id="IPR022408">
    <property type="entry name" value="Acyl-CoA-binding_prot_CS"/>
</dbReference>
<dbReference type="InterPro" id="IPR000582">
    <property type="entry name" value="Acyl-CoA-binding_protein"/>
</dbReference>
<dbReference type="InterPro" id="IPR035984">
    <property type="entry name" value="Acyl-CoA-binding_sf"/>
</dbReference>
<dbReference type="InterPro" id="IPR014352">
    <property type="entry name" value="FERM/acyl-CoA-bd_prot_sf"/>
</dbReference>
<dbReference type="PANTHER" id="PTHR23310:SF51">
    <property type="entry name" value="ACYL-COA-BINDING DOMAIN-CONTAINING PROTEIN 7"/>
    <property type="match status" value="1"/>
</dbReference>
<dbReference type="PANTHER" id="PTHR23310">
    <property type="entry name" value="ACYL-COA-BINDING PROTEIN, ACBP"/>
    <property type="match status" value="1"/>
</dbReference>
<dbReference type="Pfam" id="PF00887">
    <property type="entry name" value="ACBP"/>
    <property type="match status" value="1"/>
</dbReference>
<dbReference type="PRINTS" id="PR00689">
    <property type="entry name" value="ACOABINDINGP"/>
</dbReference>
<dbReference type="SUPFAM" id="SSF47027">
    <property type="entry name" value="Acyl-CoA binding protein"/>
    <property type="match status" value="1"/>
</dbReference>
<dbReference type="PROSITE" id="PS00880">
    <property type="entry name" value="ACB_1"/>
    <property type="match status" value="1"/>
</dbReference>
<dbReference type="PROSITE" id="PS51228">
    <property type="entry name" value="ACB_2"/>
    <property type="match status" value="1"/>
</dbReference>
<name>ACBP_PELRI</name>
<evidence type="ECO:0000250" key="1"/>
<evidence type="ECO:0000250" key="2">
    <source>
        <dbReference type="UniProtKB" id="P07108"/>
    </source>
</evidence>
<evidence type="ECO:0000255" key="3">
    <source>
        <dbReference type="PROSITE-ProRule" id="PRU00573"/>
    </source>
</evidence>
<evidence type="ECO:0000269" key="4">
    <source>
    </source>
</evidence>
<evidence type="ECO:0000305" key="5"/>
<keyword id="KW-0903">Direct protein sequencing</keyword>
<keyword id="KW-0256">Endoplasmic reticulum</keyword>
<keyword id="KW-0333">Golgi apparatus</keyword>
<keyword id="KW-0446">Lipid-binding</keyword>
<keyword id="KW-0813">Transport</keyword>
<sequence>MSPQADFDKAAGDVKKLKTKPTDDELKELYGLYKQSTVGDINIECPGMLDLKGKAKWDAWNLKKGLSKEDAMSAYVSKAHELIEKYGL</sequence>
<comment type="function">
    <text>May play important functions in the control of brain and pituitary activities. May regulate GABA neurotransmission through a paracrine and/or autocrine mechanism. May not bind acyl-CoA esters.</text>
</comment>
<comment type="subcellular location">
    <subcellularLocation>
        <location evidence="2">Endoplasmic reticulum</location>
    </subcellularLocation>
    <subcellularLocation>
        <location evidence="2">Golgi apparatus</location>
    </subcellularLocation>
    <text evidence="2">Golgi localization is dependent on ligand binding.</text>
</comment>
<comment type="tissue specificity">
    <text>Brain. Is selectively expressed in glial cells.</text>
</comment>
<comment type="similarity">
    <text evidence="5">Belongs to the ACBP family.</text>
</comment>
<protein>
    <recommendedName>
        <fullName>Acyl-CoA-binding protein homolog</fullName>
        <shortName>ACBP</shortName>
    </recommendedName>
    <alternativeName>
        <fullName>Diazepam-binding inhibitor homolog</fullName>
        <shortName>DBI</shortName>
    </alternativeName>
</protein>
<accession>P45883</accession>
<organism>
    <name type="scientific">Pelophylax ridibundus</name>
    <name type="common">Marsh frog</name>
    <name type="synonym">Rana ridibunda</name>
    <dbReference type="NCBI Taxonomy" id="8406"/>
    <lineage>
        <taxon>Eukaryota</taxon>
        <taxon>Metazoa</taxon>
        <taxon>Chordata</taxon>
        <taxon>Craniata</taxon>
        <taxon>Vertebrata</taxon>
        <taxon>Euteleostomi</taxon>
        <taxon>Amphibia</taxon>
        <taxon>Batrachia</taxon>
        <taxon>Anura</taxon>
        <taxon>Neobatrachia</taxon>
        <taxon>Ranoidea</taxon>
        <taxon>Ranidae</taxon>
        <taxon>Pelophylax</taxon>
    </lineage>
</organism>
<proteinExistence type="evidence at protein level"/>
<reference key="1">
    <citation type="journal article" date="1994" name="Proc. Natl. Acad. Sci. U.S.A.">
        <title>Frog diazepam-binding inhibitor: peptide sequence, cDNA cloning, and expression in the brain.</title>
        <authorList>
            <person name="Lihrmann I."/>
            <person name="Plaquevent J.-C."/>
            <person name="Tostivint H."/>
            <person name="Raijmakers R."/>
            <person name="Tonon M.-C."/>
            <person name="Conlon J.M."/>
            <person name="Vaudry H."/>
        </authorList>
    </citation>
    <scope>NUCLEOTIDE SEQUENCE [MRNA]</scope>
    <scope>PROTEIN SEQUENCE OF 2-40 AND 59-88</scope>
    <source>
        <tissue>Brain</tissue>
    </source>
</reference>
<reference key="2">
    <citation type="journal article" date="1992" name="Peptides">
        <title>Distribution and characterization of endozepine-like immunoreactivity in the central nervous system of the frog Rana ridibunda.</title>
        <authorList>
            <person name="Malagon M."/>
            <person name="Vaudry H."/>
            <person name="Vallarino M."/>
            <person name="Gracia-Navarro F."/>
            <person name="Tonon M.C."/>
        </authorList>
    </citation>
    <scope>CHARACTERIZATION</scope>
    <source>
        <tissue>Brain</tissue>
    </source>
</reference>
<feature type="initiator methionine" description="Removed" evidence="4">
    <location>
        <position position="1"/>
    </location>
</feature>
<feature type="chain" id="PRO_0000214009" description="Acyl-CoA-binding protein homolog">
    <location>
        <begin position="2"/>
        <end position="88"/>
    </location>
</feature>
<feature type="domain" description="ACB" evidence="3">
    <location>
        <begin position="3"/>
        <end position="88"/>
    </location>
</feature>
<feature type="binding site" evidence="1">
    <location>
        <position position="15"/>
    </location>
    <ligand>
        <name>an acyl-CoA</name>
        <dbReference type="ChEBI" id="CHEBI:58342"/>
    </ligand>
</feature>
<feature type="binding site" evidence="1">
    <location>
        <begin position="30"/>
        <end position="34"/>
    </location>
    <ligand>
        <name>an acyl-CoA</name>
        <dbReference type="ChEBI" id="CHEBI:58342"/>
    </ligand>
</feature>
<feature type="binding site" evidence="1">
    <location>
        <position position="52"/>
    </location>
    <ligand>
        <name>an acyl-CoA</name>
        <dbReference type="ChEBI" id="CHEBI:58342"/>
    </ligand>
</feature>
<feature type="binding site" evidence="1">
    <location>
        <position position="56"/>
    </location>
    <ligand>
        <name>an acyl-CoA</name>
        <dbReference type="ChEBI" id="CHEBI:58342"/>
    </ligand>
</feature>
<feature type="binding site" evidence="1">
    <location>
        <position position="75"/>
    </location>
    <ligand>
        <name>an acyl-CoA</name>
        <dbReference type="ChEBI" id="CHEBI:58342"/>
    </ligand>
</feature>